<evidence type="ECO:0000255" key="1">
    <source>
        <dbReference type="HAMAP-Rule" id="MF_00124"/>
    </source>
</evidence>
<keyword id="KW-0067">ATP-binding</keyword>
<keyword id="KW-0963">Cytoplasm</keyword>
<keyword id="KW-0237">DNA synthesis</keyword>
<keyword id="KW-0418">Kinase</keyword>
<keyword id="KW-0479">Metal-binding</keyword>
<keyword id="KW-0547">Nucleotide-binding</keyword>
<keyword id="KW-1185">Reference proteome</keyword>
<keyword id="KW-0808">Transferase</keyword>
<keyword id="KW-0862">Zinc</keyword>
<proteinExistence type="inferred from homology"/>
<feature type="chain" id="PRO_0000174961" description="Thymidine kinase">
    <location>
        <begin position="1"/>
        <end position="194"/>
    </location>
</feature>
<feature type="active site" description="Proton acceptor" evidence="1">
    <location>
        <position position="89"/>
    </location>
</feature>
<feature type="binding site" evidence="1">
    <location>
        <begin position="15"/>
        <end position="22"/>
    </location>
    <ligand>
        <name>ATP</name>
        <dbReference type="ChEBI" id="CHEBI:30616"/>
    </ligand>
</feature>
<feature type="binding site" evidence="1">
    <location>
        <begin position="88"/>
        <end position="91"/>
    </location>
    <ligand>
        <name>ATP</name>
        <dbReference type="ChEBI" id="CHEBI:30616"/>
    </ligand>
</feature>
<feature type="binding site" evidence="1">
    <location>
        <position position="145"/>
    </location>
    <ligand>
        <name>Zn(2+)</name>
        <dbReference type="ChEBI" id="CHEBI:29105"/>
    </ligand>
</feature>
<feature type="binding site" evidence="1">
    <location>
        <position position="148"/>
    </location>
    <ligand>
        <name>Zn(2+)</name>
        <dbReference type="ChEBI" id="CHEBI:29105"/>
    </ligand>
</feature>
<feature type="binding site" evidence="1">
    <location>
        <position position="183"/>
    </location>
    <ligand>
        <name>Zn(2+)</name>
        <dbReference type="ChEBI" id="CHEBI:29105"/>
    </ligand>
</feature>
<feature type="binding site" evidence="1">
    <location>
        <position position="186"/>
    </location>
    <ligand>
        <name>Zn(2+)</name>
        <dbReference type="ChEBI" id="CHEBI:29105"/>
    </ligand>
</feature>
<protein>
    <recommendedName>
        <fullName evidence="1">Thymidine kinase</fullName>
        <ecNumber evidence="1">2.7.1.21</ecNumber>
    </recommendedName>
</protein>
<gene>
    <name evidence="1" type="primary">tdk</name>
    <name type="ordered locus">BLi03954</name>
    <name type="ordered locus">BL03975</name>
</gene>
<organism>
    <name type="scientific">Bacillus licheniformis (strain ATCC 14580 / DSM 13 / JCM 2505 / CCUG 7422 / NBRC 12200 / NCIMB 9375 / NCTC 10341 / NRRL NRS-1264 / Gibson 46)</name>
    <dbReference type="NCBI Taxonomy" id="279010"/>
    <lineage>
        <taxon>Bacteria</taxon>
        <taxon>Bacillati</taxon>
        <taxon>Bacillota</taxon>
        <taxon>Bacilli</taxon>
        <taxon>Bacillales</taxon>
        <taxon>Bacillaceae</taxon>
        <taxon>Bacillus</taxon>
    </lineage>
</organism>
<comment type="catalytic activity">
    <reaction evidence="1">
        <text>thymidine + ATP = dTMP + ADP + H(+)</text>
        <dbReference type="Rhea" id="RHEA:19129"/>
        <dbReference type="ChEBI" id="CHEBI:15378"/>
        <dbReference type="ChEBI" id="CHEBI:17748"/>
        <dbReference type="ChEBI" id="CHEBI:30616"/>
        <dbReference type="ChEBI" id="CHEBI:63528"/>
        <dbReference type="ChEBI" id="CHEBI:456216"/>
        <dbReference type="EC" id="2.7.1.21"/>
    </reaction>
</comment>
<comment type="subunit">
    <text evidence="1">Homotetramer.</text>
</comment>
<comment type="subcellular location">
    <subcellularLocation>
        <location evidence="1">Cytoplasm</location>
    </subcellularLocation>
</comment>
<comment type="similarity">
    <text evidence="1">Belongs to the thymidine kinase family.</text>
</comment>
<name>KITH_BACLD</name>
<dbReference type="EC" id="2.7.1.21" evidence="1"/>
<dbReference type="EMBL" id="AE017333">
    <property type="protein sequence ID" value="AAU42768.1"/>
    <property type="molecule type" value="Genomic_DNA"/>
</dbReference>
<dbReference type="EMBL" id="CP000002">
    <property type="protein sequence ID" value="AAU25393.1"/>
    <property type="molecule type" value="Genomic_DNA"/>
</dbReference>
<dbReference type="RefSeq" id="WP_003186050.1">
    <property type="nucleotide sequence ID" value="NC_006322.1"/>
</dbReference>
<dbReference type="SMR" id="Q65DU6"/>
<dbReference type="STRING" id="279010.BL03975"/>
<dbReference type="KEGG" id="bld:BLi03954"/>
<dbReference type="KEGG" id="bli:BL03975"/>
<dbReference type="PATRIC" id="fig|279010.13.peg.4023"/>
<dbReference type="eggNOG" id="COG1435">
    <property type="taxonomic scope" value="Bacteria"/>
</dbReference>
<dbReference type="HOGENOM" id="CLU_064400_3_0_9"/>
<dbReference type="Proteomes" id="UP000000606">
    <property type="component" value="Chromosome"/>
</dbReference>
<dbReference type="GO" id="GO:0005829">
    <property type="term" value="C:cytosol"/>
    <property type="evidence" value="ECO:0007669"/>
    <property type="project" value="TreeGrafter"/>
</dbReference>
<dbReference type="GO" id="GO:0005524">
    <property type="term" value="F:ATP binding"/>
    <property type="evidence" value="ECO:0007669"/>
    <property type="project" value="UniProtKB-UniRule"/>
</dbReference>
<dbReference type="GO" id="GO:0004797">
    <property type="term" value="F:thymidine kinase activity"/>
    <property type="evidence" value="ECO:0007669"/>
    <property type="project" value="UniProtKB-UniRule"/>
</dbReference>
<dbReference type="GO" id="GO:0008270">
    <property type="term" value="F:zinc ion binding"/>
    <property type="evidence" value="ECO:0007669"/>
    <property type="project" value="UniProtKB-UniRule"/>
</dbReference>
<dbReference type="GO" id="GO:0071897">
    <property type="term" value="P:DNA biosynthetic process"/>
    <property type="evidence" value="ECO:0007669"/>
    <property type="project" value="UniProtKB-KW"/>
</dbReference>
<dbReference type="GO" id="GO:0046104">
    <property type="term" value="P:thymidine metabolic process"/>
    <property type="evidence" value="ECO:0007669"/>
    <property type="project" value="TreeGrafter"/>
</dbReference>
<dbReference type="FunFam" id="3.30.60.20:FF:000026">
    <property type="entry name" value="Thymidine kinase"/>
    <property type="match status" value="1"/>
</dbReference>
<dbReference type="FunFam" id="3.40.50.300:FF:000384">
    <property type="entry name" value="Thymidine kinase"/>
    <property type="match status" value="1"/>
</dbReference>
<dbReference type="Gene3D" id="3.30.60.20">
    <property type="match status" value="1"/>
</dbReference>
<dbReference type="Gene3D" id="3.40.50.300">
    <property type="entry name" value="P-loop containing nucleotide triphosphate hydrolases"/>
    <property type="match status" value="1"/>
</dbReference>
<dbReference type="HAMAP" id="MF_00124">
    <property type="entry name" value="Thymidine_kinase"/>
    <property type="match status" value="1"/>
</dbReference>
<dbReference type="InterPro" id="IPR027417">
    <property type="entry name" value="P-loop_NTPase"/>
</dbReference>
<dbReference type="InterPro" id="IPR001267">
    <property type="entry name" value="Thymidine_kinase"/>
</dbReference>
<dbReference type="InterPro" id="IPR020633">
    <property type="entry name" value="Thymidine_kinase_CS"/>
</dbReference>
<dbReference type="NCBIfam" id="NF003296">
    <property type="entry name" value="PRK04296.1-1"/>
    <property type="match status" value="1"/>
</dbReference>
<dbReference type="PANTHER" id="PTHR11441">
    <property type="entry name" value="THYMIDINE KINASE"/>
    <property type="match status" value="1"/>
</dbReference>
<dbReference type="PANTHER" id="PTHR11441:SF0">
    <property type="entry name" value="THYMIDINE KINASE, CYTOSOLIC"/>
    <property type="match status" value="1"/>
</dbReference>
<dbReference type="Pfam" id="PF00265">
    <property type="entry name" value="TK"/>
    <property type="match status" value="1"/>
</dbReference>
<dbReference type="PIRSF" id="PIRSF035805">
    <property type="entry name" value="TK_cell"/>
    <property type="match status" value="1"/>
</dbReference>
<dbReference type="SUPFAM" id="SSF57716">
    <property type="entry name" value="Glucocorticoid receptor-like (DNA-binding domain)"/>
    <property type="match status" value="1"/>
</dbReference>
<dbReference type="SUPFAM" id="SSF52540">
    <property type="entry name" value="P-loop containing nucleoside triphosphate hydrolases"/>
    <property type="match status" value="1"/>
</dbReference>
<dbReference type="PROSITE" id="PS00603">
    <property type="entry name" value="TK_CELLULAR_TYPE"/>
    <property type="match status" value="1"/>
</dbReference>
<reference key="1">
    <citation type="journal article" date="2004" name="J. Mol. Microbiol. Biotechnol.">
        <title>The complete genome sequence of Bacillus licheniformis DSM13, an organism with great industrial potential.</title>
        <authorList>
            <person name="Veith B."/>
            <person name="Herzberg C."/>
            <person name="Steckel S."/>
            <person name="Feesche J."/>
            <person name="Maurer K.H."/>
            <person name="Ehrenreich P."/>
            <person name="Baeumer S."/>
            <person name="Henne A."/>
            <person name="Liesegang H."/>
            <person name="Merkl R."/>
            <person name="Ehrenreich A."/>
            <person name="Gottschalk G."/>
        </authorList>
    </citation>
    <scope>NUCLEOTIDE SEQUENCE [LARGE SCALE GENOMIC DNA]</scope>
    <source>
        <strain>ATCC 14580 / DSM 13 / JCM 2505 / CCUG 7422 / NBRC 12200 / NCIMB 9375 / NCTC 10341 / NRRL NRS-1264 / Gibson 46</strain>
    </source>
</reference>
<reference key="2">
    <citation type="journal article" date="2004" name="Genome Biol.">
        <title>Complete genome sequence of the industrial bacterium Bacillus licheniformis and comparisons with closely related Bacillus species.</title>
        <authorList>
            <person name="Rey M.W."/>
            <person name="Ramaiya P."/>
            <person name="Nelson B.A."/>
            <person name="Brody-Karpin S.D."/>
            <person name="Zaretsky E.J."/>
            <person name="Tang M."/>
            <person name="Lopez de Leon A."/>
            <person name="Xiang H."/>
            <person name="Gusti V."/>
            <person name="Clausen I.G."/>
            <person name="Olsen P.B."/>
            <person name="Rasmussen M.D."/>
            <person name="Andersen J.T."/>
            <person name="Joergensen P.L."/>
            <person name="Larsen T.S."/>
            <person name="Sorokin A."/>
            <person name="Bolotin A."/>
            <person name="Lapidus A."/>
            <person name="Galleron N."/>
            <person name="Ehrlich S.D."/>
            <person name="Berka R.M."/>
        </authorList>
    </citation>
    <scope>NUCLEOTIDE SEQUENCE [LARGE SCALE GENOMIC DNA]</scope>
    <source>
        <strain>ATCC 14580 / DSM 13 / JCM 2505 / CCUG 7422 / NBRC 12200 / NCIMB 9375 / NCTC 10341 / NRRL NRS-1264 / Gibson 46</strain>
    </source>
</reference>
<sequence>MYIMKQSGWLELICGSMFSGKSEELIRRIKRATFAKQEVKVFKPAIDNRYSSESVVSHNGTSIVCHAIASPEEIFQYISKETDVIGVDEVQFFDETIVGTLTSLADQGYRVIAAGLDLDFRGEPFGVVPDLMALAETVTKLQAVCSVCGSPASRTQRLINGKPASYDDPVILVGASEAYEARCRHHHEVPGNPK</sequence>
<accession>Q65DU6</accession>
<accession>Q62PB8</accession>